<gene>
    <name evidence="3" type="primary">glcU</name>
    <name evidence="7" type="ordered locus">SSO2849</name>
</gene>
<reference key="1">
    <citation type="journal article" date="2001" name="Proc. Natl. Acad. Sci. U.S.A.">
        <title>The complete genome of the crenarchaeon Sulfolobus solfataricus P2.</title>
        <authorList>
            <person name="She Q."/>
            <person name="Singh R.K."/>
            <person name="Confalonieri F."/>
            <person name="Zivanovic Y."/>
            <person name="Allard G."/>
            <person name="Awayez M.J."/>
            <person name="Chan-Weiher C.C.-Y."/>
            <person name="Clausen I.G."/>
            <person name="Curtis B.A."/>
            <person name="De Moors A."/>
            <person name="Erauso G."/>
            <person name="Fletcher C."/>
            <person name="Gordon P.M.K."/>
            <person name="Heikamp-de Jong I."/>
            <person name="Jeffries A.C."/>
            <person name="Kozera C.J."/>
            <person name="Medina N."/>
            <person name="Peng X."/>
            <person name="Thi-Ngoc H.P."/>
            <person name="Redder P."/>
            <person name="Schenk M.E."/>
            <person name="Theriault C."/>
            <person name="Tolstrup N."/>
            <person name="Charlebois R.L."/>
            <person name="Doolittle W.F."/>
            <person name="Duguet M."/>
            <person name="Gaasterland T."/>
            <person name="Garrett R.A."/>
            <person name="Ragan M.A."/>
            <person name="Sensen C.W."/>
            <person name="Van der Oost J."/>
        </authorList>
    </citation>
    <scope>NUCLEOTIDE SEQUENCE [LARGE SCALE GENOMIC DNA]</scope>
    <source>
        <strain>ATCC 35092 / DSM 1617 / JCM 11322 / P2</strain>
    </source>
</reference>
<reference key="2">
    <citation type="journal article" date="1999" name="J. Bacteriol.">
        <title>Glucose transport in the extremely thermoacidophilic Sulfolobus solfataricus involves a high-affinity membrane-integrated binding protein.</title>
        <authorList>
            <person name="Albers S.V."/>
            <person name="Elferink M.G."/>
            <person name="Charlebois R.L."/>
            <person name="Sensen C.W."/>
            <person name="Driessen A.J."/>
            <person name="Konings W.N."/>
        </authorList>
    </citation>
    <scope>FUNCTION</scope>
    <scope>SUBUNIT</scope>
</reference>
<reference key="3">
    <citation type="journal article" date="2001" name="Mol. Microbiol.">
        <title>Sugar transport in Sulfolobus solfataricus is mediated by two families of binding protein-dependent ABC transporters.</title>
        <authorList>
            <person name="Elferink M.G."/>
            <person name="Albers S.V."/>
            <person name="Konings W.N."/>
            <person name="Driessen A.J."/>
        </authorList>
    </citation>
    <scope>NOMENCLATURE</scope>
    <scope>FUNCTION</scope>
</reference>
<organism>
    <name type="scientific">Saccharolobus solfataricus (strain ATCC 35092 / DSM 1617 / JCM 11322 / P2)</name>
    <name type="common">Sulfolobus solfataricus</name>
    <dbReference type="NCBI Taxonomy" id="273057"/>
    <lineage>
        <taxon>Archaea</taxon>
        <taxon>Thermoproteota</taxon>
        <taxon>Thermoprotei</taxon>
        <taxon>Sulfolobales</taxon>
        <taxon>Sulfolobaceae</taxon>
        <taxon>Saccharolobus</taxon>
    </lineage>
</organism>
<comment type="function">
    <text evidence="5 6">Part of the ABC transporter complex GlcSTUV involved in glucose uptake. Responsible for the translocation of the substrate across the membrane.</text>
</comment>
<comment type="subunit">
    <text evidence="5">The complex is composed of two ATP-binding proteins (GlcV), two transmembrane proteins (GlcT and GlcU) and a solute-binding protein (GlcS).</text>
</comment>
<comment type="subcellular location">
    <subcellularLocation>
        <location evidence="4">Cell membrane</location>
        <topology evidence="1">Multi-pass membrane protein</topology>
    </subcellularLocation>
</comment>
<comment type="similarity">
    <text evidence="4">Belongs to the binding-protein-dependent transport system permease family.</text>
</comment>
<feature type="chain" id="PRO_0000447614" description="Glucose import system permease protein GlcU">
    <location>
        <begin position="1"/>
        <end position="287"/>
    </location>
</feature>
<feature type="transmembrane region" description="Helical" evidence="1">
    <location>
        <begin position="14"/>
        <end position="34"/>
    </location>
</feature>
<feature type="transmembrane region" description="Helical" evidence="1">
    <location>
        <begin position="76"/>
        <end position="96"/>
    </location>
</feature>
<feature type="transmembrane region" description="Helical" evidence="1">
    <location>
        <begin position="113"/>
        <end position="133"/>
    </location>
</feature>
<feature type="transmembrane region" description="Helical" evidence="1">
    <location>
        <begin position="149"/>
        <end position="169"/>
    </location>
</feature>
<feature type="transmembrane region" description="Helical" evidence="1">
    <location>
        <begin position="194"/>
        <end position="214"/>
    </location>
</feature>
<feature type="transmembrane region" description="Helical" evidence="1">
    <location>
        <begin position="218"/>
        <end position="238"/>
    </location>
</feature>
<feature type="transmembrane region" description="Helical" evidence="1">
    <location>
        <begin position="250"/>
        <end position="270"/>
    </location>
</feature>
<feature type="domain" description="ABC transmembrane type-1" evidence="2">
    <location>
        <begin position="71"/>
        <end position="269"/>
    </location>
</feature>
<name>GLCU_SACS2</name>
<dbReference type="EMBL" id="AE006641">
    <property type="protein sequence ID" value="AAK42959.1"/>
    <property type="molecule type" value="Genomic_DNA"/>
</dbReference>
<dbReference type="PIR" id="H90462">
    <property type="entry name" value="H90462"/>
</dbReference>
<dbReference type="SMR" id="Q97UY9"/>
<dbReference type="FunCoup" id="Q97UY9">
    <property type="interactions" value="30"/>
</dbReference>
<dbReference type="STRING" id="273057.SSO2849"/>
<dbReference type="TCDB" id="3.A.1.1.13">
    <property type="family name" value="the atp-binding cassette (abc) superfamily"/>
</dbReference>
<dbReference type="PaxDb" id="273057-SSO2849"/>
<dbReference type="EnsemblBacteria" id="AAK42959">
    <property type="protein sequence ID" value="AAK42959"/>
    <property type="gene ID" value="SSO2849"/>
</dbReference>
<dbReference type="KEGG" id="sso:SSO2849"/>
<dbReference type="PATRIC" id="fig|273057.12.peg.2935"/>
<dbReference type="eggNOG" id="arCOG00159">
    <property type="taxonomic scope" value="Archaea"/>
</dbReference>
<dbReference type="HOGENOM" id="CLU_016047_1_2_2"/>
<dbReference type="InParanoid" id="Q97UY9"/>
<dbReference type="PhylomeDB" id="Q97UY9"/>
<dbReference type="Proteomes" id="UP000001974">
    <property type="component" value="Chromosome"/>
</dbReference>
<dbReference type="GO" id="GO:0005886">
    <property type="term" value="C:plasma membrane"/>
    <property type="evidence" value="ECO:0007669"/>
    <property type="project" value="UniProtKB-SubCell"/>
</dbReference>
<dbReference type="GO" id="GO:0055085">
    <property type="term" value="P:transmembrane transport"/>
    <property type="evidence" value="ECO:0007669"/>
    <property type="project" value="InterPro"/>
</dbReference>
<dbReference type="CDD" id="cd06261">
    <property type="entry name" value="TM_PBP2"/>
    <property type="match status" value="1"/>
</dbReference>
<dbReference type="Gene3D" id="1.10.3720.10">
    <property type="entry name" value="MetI-like"/>
    <property type="match status" value="1"/>
</dbReference>
<dbReference type="InterPro" id="IPR054927">
    <property type="entry name" value="GlcU_transporter"/>
</dbReference>
<dbReference type="InterPro" id="IPR000515">
    <property type="entry name" value="MetI-like"/>
</dbReference>
<dbReference type="InterPro" id="IPR035906">
    <property type="entry name" value="MetI-like_sf"/>
</dbReference>
<dbReference type="NCBIfam" id="NF040932">
    <property type="entry name" value="ABC_arch_GlcU"/>
    <property type="match status" value="1"/>
</dbReference>
<dbReference type="PANTHER" id="PTHR43879">
    <property type="entry name" value="ABC TRANSPORTER PERMEASE PROTEIN"/>
    <property type="match status" value="1"/>
</dbReference>
<dbReference type="PANTHER" id="PTHR43879:SF1">
    <property type="entry name" value="GLUCOSE IMPORT SYSTEM PERMEASE PROTEIN GLCU"/>
    <property type="match status" value="1"/>
</dbReference>
<dbReference type="Pfam" id="PF00528">
    <property type="entry name" value="BPD_transp_1"/>
    <property type="match status" value="1"/>
</dbReference>
<dbReference type="SUPFAM" id="SSF161098">
    <property type="entry name" value="MetI-like"/>
    <property type="match status" value="1"/>
</dbReference>
<dbReference type="PROSITE" id="PS50928">
    <property type="entry name" value="ABC_TM1"/>
    <property type="match status" value="1"/>
</dbReference>
<keyword id="KW-1003">Cell membrane</keyword>
<keyword id="KW-0472">Membrane</keyword>
<keyword id="KW-1185">Reference proteome</keyword>
<keyword id="KW-0762">Sugar transport</keyword>
<keyword id="KW-0812">Transmembrane</keyword>
<keyword id="KW-1133">Transmembrane helix</keyword>
<keyword id="KW-0813">Transport</keyword>
<accession>Q97UY9</accession>
<evidence type="ECO:0000255" key="1"/>
<evidence type="ECO:0000255" key="2">
    <source>
        <dbReference type="PROSITE-ProRule" id="PRU00441"/>
    </source>
</evidence>
<evidence type="ECO:0000303" key="3">
    <source>
    </source>
</evidence>
<evidence type="ECO:0000305" key="4"/>
<evidence type="ECO:0000305" key="5">
    <source>
    </source>
</evidence>
<evidence type="ECO:0000305" key="6">
    <source>
    </source>
</evidence>
<evidence type="ECO:0000312" key="7">
    <source>
        <dbReference type="EMBL" id="AAK42959.1"/>
    </source>
</evidence>
<protein>
    <recommendedName>
        <fullName evidence="4">Glucose import system permease protein GlcU</fullName>
    </recommendedName>
</protein>
<proteinExistence type="evidence at protein level"/>
<sequence length="287" mass="31182">MDKKMRPVIKASLHYLALAIVSVIWLIPVYAMLINGFKSNFEVLSTPVLVPPTKITFEAYVSVLLSLAKPLINSLIIVIPTSFISAFLGAMGAYFFYTLSYSFSRASSAISDVLFSLISLATFIPQEATLLPLTRLIVSMGLLDSYIGIIFALLIFYIPTGALLMSMFISVIPRSLIEAAKMDGTGDLKIFMKIVFPLSMPGFISTLIFIIIQAWNNFFIPLVLVTTPGMKLTSIAVLSYSGAYGTLYNDTFAAGMVASIIPLAIFVFLGRYFIRGLMALGGGGKGV</sequence>